<gene>
    <name evidence="1" type="primary">dsrB</name>
    <name type="ordered locus">YE2589</name>
</gene>
<proteinExistence type="inferred from homology"/>
<comment type="similarity">
    <text evidence="1">Belongs to the DsrB family.</text>
</comment>
<protein>
    <recommendedName>
        <fullName evidence="1">Protein DsrB</fullName>
    </recommendedName>
</protein>
<organism>
    <name type="scientific">Yersinia enterocolitica serotype O:8 / biotype 1B (strain NCTC 13174 / 8081)</name>
    <dbReference type="NCBI Taxonomy" id="393305"/>
    <lineage>
        <taxon>Bacteria</taxon>
        <taxon>Pseudomonadati</taxon>
        <taxon>Pseudomonadota</taxon>
        <taxon>Gammaproteobacteria</taxon>
        <taxon>Enterobacterales</taxon>
        <taxon>Yersiniaceae</taxon>
        <taxon>Yersinia</taxon>
    </lineage>
</organism>
<reference key="1">
    <citation type="journal article" date="2006" name="PLoS Genet.">
        <title>The complete genome sequence and comparative genome analysis of the high pathogenicity Yersinia enterocolitica strain 8081.</title>
        <authorList>
            <person name="Thomson N.R."/>
            <person name="Howard S."/>
            <person name="Wren B.W."/>
            <person name="Holden M.T.G."/>
            <person name="Crossman L."/>
            <person name="Challis G.L."/>
            <person name="Churcher C."/>
            <person name="Mungall K."/>
            <person name="Brooks K."/>
            <person name="Chillingworth T."/>
            <person name="Feltwell T."/>
            <person name="Abdellah Z."/>
            <person name="Hauser H."/>
            <person name="Jagels K."/>
            <person name="Maddison M."/>
            <person name="Moule S."/>
            <person name="Sanders M."/>
            <person name="Whitehead S."/>
            <person name="Quail M.A."/>
            <person name="Dougan G."/>
            <person name="Parkhill J."/>
            <person name="Prentice M.B."/>
        </authorList>
    </citation>
    <scope>NUCLEOTIDE SEQUENCE [LARGE SCALE GENOMIC DNA]</scope>
    <source>
        <strain>NCTC 13174 / 8081</strain>
    </source>
</reference>
<sequence>MKVNDRVTVKTDGGPRREGVVLEVEQFSEGVMYLVSLEDYPAGVWFFNEIDSHDGTFVEPLHK</sequence>
<feature type="chain" id="PRO_0000300619" description="Protein DsrB">
    <location>
        <begin position="1"/>
        <end position="63"/>
    </location>
</feature>
<name>DSRB_YERE8</name>
<dbReference type="EMBL" id="AM286415">
    <property type="protein sequence ID" value="CAL12627.1"/>
    <property type="molecule type" value="Genomic_DNA"/>
</dbReference>
<dbReference type="RefSeq" id="WP_004701013.1">
    <property type="nucleotide sequence ID" value="NC_008800.1"/>
</dbReference>
<dbReference type="RefSeq" id="YP_001006790.1">
    <property type="nucleotide sequence ID" value="NC_008800.1"/>
</dbReference>
<dbReference type="SMR" id="A1JTB7"/>
<dbReference type="GeneID" id="97456716"/>
<dbReference type="KEGG" id="yen:YE2589"/>
<dbReference type="PATRIC" id="fig|393305.7.peg.2747"/>
<dbReference type="eggNOG" id="ENOG5032ZW5">
    <property type="taxonomic scope" value="Bacteria"/>
</dbReference>
<dbReference type="HOGENOM" id="CLU_189289_0_0_6"/>
<dbReference type="OrthoDB" id="6548256at2"/>
<dbReference type="Proteomes" id="UP000000642">
    <property type="component" value="Chromosome"/>
</dbReference>
<dbReference type="HAMAP" id="MF_01549">
    <property type="entry name" value="DsrB"/>
    <property type="match status" value="1"/>
</dbReference>
<dbReference type="InterPro" id="IPR019717">
    <property type="entry name" value="Dextransucrase_DSRB"/>
</dbReference>
<dbReference type="NCBIfam" id="NF007981">
    <property type="entry name" value="PRK10708.1"/>
    <property type="match status" value="1"/>
</dbReference>
<dbReference type="Pfam" id="PF10781">
    <property type="entry name" value="DSRB"/>
    <property type="match status" value="1"/>
</dbReference>
<evidence type="ECO:0000255" key="1">
    <source>
        <dbReference type="HAMAP-Rule" id="MF_01549"/>
    </source>
</evidence>
<accession>A1JTB7</accession>